<reference key="1">
    <citation type="journal article" date="2008" name="BMC Genomics">
        <title>The genome sequence of the fish pathogen Aliivibrio salmonicida strain LFI1238 shows extensive evidence of gene decay.</title>
        <authorList>
            <person name="Hjerde E."/>
            <person name="Lorentzen M.S."/>
            <person name="Holden M.T."/>
            <person name="Seeger K."/>
            <person name="Paulsen S."/>
            <person name="Bason N."/>
            <person name="Churcher C."/>
            <person name="Harris D."/>
            <person name="Norbertczak H."/>
            <person name="Quail M.A."/>
            <person name="Sanders S."/>
            <person name="Thurston S."/>
            <person name="Parkhill J."/>
            <person name="Willassen N.P."/>
            <person name="Thomson N.R."/>
        </authorList>
    </citation>
    <scope>NUCLEOTIDE SEQUENCE [LARGE SCALE GENOMIC DNA]</scope>
    <source>
        <strain>LFI1238</strain>
    </source>
</reference>
<evidence type="ECO:0000255" key="1">
    <source>
        <dbReference type="HAMAP-Rule" id="MF_00080"/>
    </source>
</evidence>
<organism>
    <name type="scientific">Aliivibrio salmonicida (strain LFI1238)</name>
    <name type="common">Vibrio salmonicida (strain LFI1238)</name>
    <dbReference type="NCBI Taxonomy" id="316275"/>
    <lineage>
        <taxon>Bacteria</taxon>
        <taxon>Pseudomonadati</taxon>
        <taxon>Pseudomonadota</taxon>
        <taxon>Gammaproteobacteria</taxon>
        <taxon>Vibrionales</taxon>
        <taxon>Vibrionaceae</taxon>
        <taxon>Aliivibrio</taxon>
    </lineage>
</organism>
<feature type="chain" id="PRO_1000092768" description="Translation initiation factor IF-3">
    <location>
        <begin position="1"/>
        <end position="183"/>
    </location>
</feature>
<protein>
    <recommendedName>
        <fullName evidence="1">Translation initiation factor IF-3</fullName>
    </recommendedName>
</protein>
<keyword id="KW-0963">Cytoplasm</keyword>
<keyword id="KW-0396">Initiation factor</keyword>
<keyword id="KW-0648">Protein biosynthesis</keyword>
<sequence length="183" mass="20386">MKGGKRAQQPAKQNAHRLNGEIIGVKEVRLTGLDGESVGVVSLNEALDVALTAGVDLVEISPNAEPPVCRVMDYGKFLFEKAKAAKEQKKKQKQVQTKEIKFRPGTDIGDYQVKLRNLTGFLEEGNKVKVTIRFRGREMAHQNIGVDVLNRLKADTEEFAVVESFPTRIEGRQMIMVLAPKKK</sequence>
<accession>B6EN33</accession>
<gene>
    <name evidence="1" type="primary">infC</name>
    <name type="ordered locus">VSAL_I1759</name>
</gene>
<dbReference type="EMBL" id="FM178379">
    <property type="protein sequence ID" value="CAQ79444.1"/>
    <property type="molecule type" value="Genomic_DNA"/>
</dbReference>
<dbReference type="SMR" id="B6EN33"/>
<dbReference type="KEGG" id="vsa:VSAL_I1759"/>
<dbReference type="eggNOG" id="COG0290">
    <property type="taxonomic scope" value="Bacteria"/>
</dbReference>
<dbReference type="HOGENOM" id="CLU_054919_3_2_6"/>
<dbReference type="Proteomes" id="UP000001730">
    <property type="component" value="Chromosome 1"/>
</dbReference>
<dbReference type="GO" id="GO:0005829">
    <property type="term" value="C:cytosol"/>
    <property type="evidence" value="ECO:0007669"/>
    <property type="project" value="TreeGrafter"/>
</dbReference>
<dbReference type="GO" id="GO:0016020">
    <property type="term" value="C:membrane"/>
    <property type="evidence" value="ECO:0007669"/>
    <property type="project" value="TreeGrafter"/>
</dbReference>
<dbReference type="GO" id="GO:0043022">
    <property type="term" value="F:ribosome binding"/>
    <property type="evidence" value="ECO:0007669"/>
    <property type="project" value="TreeGrafter"/>
</dbReference>
<dbReference type="GO" id="GO:0003743">
    <property type="term" value="F:translation initiation factor activity"/>
    <property type="evidence" value="ECO:0007669"/>
    <property type="project" value="UniProtKB-UniRule"/>
</dbReference>
<dbReference type="GO" id="GO:0032790">
    <property type="term" value="P:ribosome disassembly"/>
    <property type="evidence" value="ECO:0007669"/>
    <property type="project" value="TreeGrafter"/>
</dbReference>
<dbReference type="FunFam" id="3.10.20.80:FF:000001">
    <property type="entry name" value="Translation initiation factor IF-3"/>
    <property type="match status" value="1"/>
</dbReference>
<dbReference type="FunFam" id="3.30.110.10:FF:000001">
    <property type="entry name" value="Translation initiation factor IF-3"/>
    <property type="match status" value="1"/>
</dbReference>
<dbReference type="Gene3D" id="3.30.110.10">
    <property type="entry name" value="Translation initiation factor 3 (IF-3), C-terminal domain"/>
    <property type="match status" value="1"/>
</dbReference>
<dbReference type="Gene3D" id="3.10.20.80">
    <property type="entry name" value="Translation initiation factor 3 (IF-3), N-terminal domain"/>
    <property type="match status" value="1"/>
</dbReference>
<dbReference type="HAMAP" id="MF_00080">
    <property type="entry name" value="IF_3"/>
    <property type="match status" value="1"/>
</dbReference>
<dbReference type="InterPro" id="IPR036788">
    <property type="entry name" value="T_IF-3_C_sf"/>
</dbReference>
<dbReference type="InterPro" id="IPR036787">
    <property type="entry name" value="T_IF-3_N_sf"/>
</dbReference>
<dbReference type="InterPro" id="IPR019813">
    <property type="entry name" value="Translation_initiation_fac3_CS"/>
</dbReference>
<dbReference type="InterPro" id="IPR001288">
    <property type="entry name" value="Translation_initiation_fac_3"/>
</dbReference>
<dbReference type="InterPro" id="IPR019815">
    <property type="entry name" value="Translation_initiation_fac_3_C"/>
</dbReference>
<dbReference type="InterPro" id="IPR019814">
    <property type="entry name" value="Translation_initiation_fac_3_N"/>
</dbReference>
<dbReference type="NCBIfam" id="TIGR00168">
    <property type="entry name" value="infC"/>
    <property type="match status" value="1"/>
</dbReference>
<dbReference type="PANTHER" id="PTHR10938">
    <property type="entry name" value="TRANSLATION INITIATION FACTOR IF-3"/>
    <property type="match status" value="1"/>
</dbReference>
<dbReference type="PANTHER" id="PTHR10938:SF0">
    <property type="entry name" value="TRANSLATION INITIATION FACTOR IF-3, MITOCHONDRIAL"/>
    <property type="match status" value="1"/>
</dbReference>
<dbReference type="Pfam" id="PF00707">
    <property type="entry name" value="IF3_C"/>
    <property type="match status" value="1"/>
</dbReference>
<dbReference type="Pfam" id="PF05198">
    <property type="entry name" value="IF3_N"/>
    <property type="match status" value="1"/>
</dbReference>
<dbReference type="SUPFAM" id="SSF55200">
    <property type="entry name" value="Translation initiation factor IF3, C-terminal domain"/>
    <property type="match status" value="1"/>
</dbReference>
<dbReference type="SUPFAM" id="SSF54364">
    <property type="entry name" value="Translation initiation factor IF3, N-terminal domain"/>
    <property type="match status" value="1"/>
</dbReference>
<dbReference type="PROSITE" id="PS00938">
    <property type="entry name" value="IF3"/>
    <property type="match status" value="1"/>
</dbReference>
<name>IF3_ALISL</name>
<proteinExistence type="inferred from homology"/>
<comment type="function">
    <text evidence="1">IF-3 binds to the 30S ribosomal subunit and shifts the equilibrium between 70S ribosomes and their 50S and 30S subunits in favor of the free subunits, thus enhancing the availability of 30S subunits on which protein synthesis initiation begins.</text>
</comment>
<comment type="subunit">
    <text evidence="1">Monomer.</text>
</comment>
<comment type="subcellular location">
    <subcellularLocation>
        <location evidence="1">Cytoplasm</location>
    </subcellularLocation>
</comment>
<comment type="similarity">
    <text evidence="1">Belongs to the IF-3 family.</text>
</comment>